<gene>
    <name evidence="1" type="primary">trmFO</name>
    <name type="synonym">gid</name>
    <name type="ordered locus">Pden_4078</name>
</gene>
<organism>
    <name type="scientific">Paracoccus denitrificans (strain Pd 1222)</name>
    <dbReference type="NCBI Taxonomy" id="318586"/>
    <lineage>
        <taxon>Bacteria</taxon>
        <taxon>Pseudomonadati</taxon>
        <taxon>Pseudomonadota</taxon>
        <taxon>Alphaproteobacteria</taxon>
        <taxon>Rhodobacterales</taxon>
        <taxon>Paracoccaceae</taxon>
        <taxon>Paracoccus</taxon>
    </lineage>
</organism>
<accession>A1B9F0</accession>
<sequence length="446" mass="48562">MEPIHIIGAGLAGSEAAWQIARAGVPVVLHEMRPQVATFAHRTGDCAEMVCSNSFRSDDDRMNAVGQLHWEMRAAGGLIMAMADRHRLPAGGALAVDRDAFSQAVTQALQAEPLVSFQPGEISDLPSEGHWIVATGPLTSEALGRSIRSLTGEGSLAFFDAIAPIVHAESIDMSICWRQSRYDKGETEEERTAYINCPMTREDYEGFIDALLAADKTEFHEGETAGYFDGCLPIEVMAERGRETLRHGPMKPVGLTNAHNPAEKPYAVVQLRRDNALGTLYNIVGFQTKMKYGAQVDVFRRIPGLQDASFARLGGIHRNTFLNSPRLIDDRLRLRARPHLRFAGQVTGVEGYVESAAMGLLAGRMAAAEALGRDLPPPPATTSMGALVSHITGGADAKTFQPMNVNFGLYPPLDAMRGGRKGRKDRYPAYTDRAKADFQQWVAGES</sequence>
<proteinExistence type="inferred from homology"/>
<feature type="chain" id="PRO_1000063923" description="Methylenetetrahydrofolate--tRNA-(uracil-5-)-methyltransferase TrmFO">
    <location>
        <begin position="1"/>
        <end position="446"/>
    </location>
</feature>
<feature type="binding site" evidence="1">
    <location>
        <begin position="8"/>
        <end position="13"/>
    </location>
    <ligand>
        <name>FAD</name>
        <dbReference type="ChEBI" id="CHEBI:57692"/>
    </ligand>
</feature>
<evidence type="ECO:0000255" key="1">
    <source>
        <dbReference type="HAMAP-Rule" id="MF_01037"/>
    </source>
</evidence>
<reference key="1">
    <citation type="submission" date="2006-12" db="EMBL/GenBank/DDBJ databases">
        <title>Complete sequence of chromosome 2 of Paracoccus denitrificans PD1222.</title>
        <authorList>
            <person name="Copeland A."/>
            <person name="Lucas S."/>
            <person name="Lapidus A."/>
            <person name="Barry K."/>
            <person name="Detter J.C."/>
            <person name="Glavina del Rio T."/>
            <person name="Hammon N."/>
            <person name="Israni S."/>
            <person name="Dalin E."/>
            <person name="Tice H."/>
            <person name="Pitluck S."/>
            <person name="Munk A.C."/>
            <person name="Brettin T."/>
            <person name="Bruce D."/>
            <person name="Han C."/>
            <person name="Tapia R."/>
            <person name="Gilna P."/>
            <person name="Schmutz J."/>
            <person name="Larimer F."/>
            <person name="Land M."/>
            <person name="Hauser L."/>
            <person name="Kyrpides N."/>
            <person name="Lykidis A."/>
            <person name="Spiro S."/>
            <person name="Richardson D.J."/>
            <person name="Moir J.W.B."/>
            <person name="Ferguson S.J."/>
            <person name="van Spanning R.J.M."/>
            <person name="Richardson P."/>
        </authorList>
    </citation>
    <scope>NUCLEOTIDE SEQUENCE [LARGE SCALE GENOMIC DNA]</scope>
    <source>
        <strain>Pd 1222</strain>
    </source>
</reference>
<comment type="function">
    <text evidence="1">Catalyzes the folate-dependent formation of 5-methyl-uridine at position 54 (M-5-U54) in all tRNAs.</text>
</comment>
<comment type="catalytic activity">
    <reaction evidence="1">
        <text>uridine(54) in tRNA + (6R)-5,10-methylene-5,6,7,8-tetrahydrofolate + NADH + H(+) = 5-methyluridine(54) in tRNA + (6S)-5,6,7,8-tetrahydrofolate + NAD(+)</text>
        <dbReference type="Rhea" id="RHEA:16873"/>
        <dbReference type="Rhea" id="RHEA-COMP:10167"/>
        <dbReference type="Rhea" id="RHEA-COMP:10193"/>
        <dbReference type="ChEBI" id="CHEBI:15378"/>
        <dbReference type="ChEBI" id="CHEBI:15636"/>
        <dbReference type="ChEBI" id="CHEBI:57453"/>
        <dbReference type="ChEBI" id="CHEBI:57540"/>
        <dbReference type="ChEBI" id="CHEBI:57945"/>
        <dbReference type="ChEBI" id="CHEBI:65315"/>
        <dbReference type="ChEBI" id="CHEBI:74447"/>
        <dbReference type="EC" id="2.1.1.74"/>
    </reaction>
</comment>
<comment type="catalytic activity">
    <reaction evidence="1">
        <text>uridine(54) in tRNA + (6R)-5,10-methylene-5,6,7,8-tetrahydrofolate + NADPH + H(+) = 5-methyluridine(54) in tRNA + (6S)-5,6,7,8-tetrahydrofolate + NADP(+)</text>
        <dbReference type="Rhea" id="RHEA:62372"/>
        <dbReference type="Rhea" id="RHEA-COMP:10167"/>
        <dbReference type="Rhea" id="RHEA-COMP:10193"/>
        <dbReference type="ChEBI" id="CHEBI:15378"/>
        <dbReference type="ChEBI" id="CHEBI:15636"/>
        <dbReference type="ChEBI" id="CHEBI:57453"/>
        <dbReference type="ChEBI" id="CHEBI:57783"/>
        <dbReference type="ChEBI" id="CHEBI:58349"/>
        <dbReference type="ChEBI" id="CHEBI:65315"/>
        <dbReference type="ChEBI" id="CHEBI:74447"/>
        <dbReference type="EC" id="2.1.1.74"/>
    </reaction>
</comment>
<comment type="cofactor">
    <cofactor evidence="1">
        <name>FAD</name>
        <dbReference type="ChEBI" id="CHEBI:57692"/>
    </cofactor>
</comment>
<comment type="subcellular location">
    <subcellularLocation>
        <location evidence="1">Cytoplasm</location>
    </subcellularLocation>
</comment>
<comment type="similarity">
    <text evidence="1">Belongs to the MnmG family. TrmFO subfamily.</text>
</comment>
<protein>
    <recommendedName>
        <fullName evidence="1">Methylenetetrahydrofolate--tRNA-(uracil-5-)-methyltransferase TrmFO</fullName>
        <ecNumber evidence="1">2.1.1.74</ecNumber>
    </recommendedName>
    <alternativeName>
        <fullName evidence="1">Folate-dependent tRNA (uracil-5-)-methyltransferase</fullName>
    </alternativeName>
    <alternativeName>
        <fullName evidence="1">Folate-dependent tRNA(M-5-U54)-methyltransferase</fullName>
    </alternativeName>
</protein>
<dbReference type="EC" id="2.1.1.74" evidence="1"/>
<dbReference type="EMBL" id="CP000490">
    <property type="protein sequence ID" value="ABL72144.1"/>
    <property type="molecule type" value="Genomic_DNA"/>
</dbReference>
<dbReference type="RefSeq" id="WP_011750312.1">
    <property type="nucleotide sequence ID" value="NC_008687.1"/>
</dbReference>
<dbReference type="SMR" id="A1B9F0"/>
<dbReference type="STRING" id="318586.Pden_4078"/>
<dbReference type="EnsemblBacteria" id="ABL72144">
    <property type="protein sequence ID" value="ABL72144"/>
    <property type="gene ID" value="Pden_4078"/>
</dbReference>
<dbReference type="GeneID" id="93453743"/>
<dbReference type="KEGG" id="pde:Pden_4078"/>
<dbReference type="eggNOG" id="COG1206">
    <property type="taxonomic scope" value="Bacteria"/>
</dbReference>
<dbReference type="HOGENOM" id="CLU_033057_1_0_5"/>
<dbReference type="OrthoDB" id="9803114at2"/>
<dbReference type="Proteomes" id="UP000000361">
    <property type="component" value="Chromosome 2"/>
</dbReference>
<dbReference type="GO" id="GO:0005829">
    <property type="term" value="C:cytosol"/>
    <property type="evidence" value="ECO:0007669"/>
    <property type="project" value="TreeGrafter"/>
</dbReference>
<dbReference type="GO" id="GO:0050660">
    <property type="term" value="F:flavin adenine dinucleotide binding"/>
    <property type="evidence" value="ECO:0007669"/>
    <property type="project" value="UniProtKB-UniRule"/>
</dbReference>
<dbReference type="GO" id="GO:0047151">
    <property type="term" value="F:tRNA (uracil(54)-C5)-methyltransferase activity, 5,10-methylenetetrahydrofolate-dependent"/>
    <property type="evidence" value="ECO:0007669"/>
    <property type="project" value="UniProtKB-UniRule"/>
</dbReference>
<dbReference type="GO" id="GO:0030488">
    <property type="term" value="P:tRNA methylation"/>
    <property type="evidence" value="ECO:0007669"/>
    <property type="project" value="TreeGrafter"/>
</dbReference>
<dbReference type="GO" id="GO:0002098">
    <property type="term" value="P:tRNA wobble uridine modification"/>
    <property type="evidence" value="ECO:0007669"/>
    <property type="project" value="TreeGrafter"/>
</dbReference>
<dbReference type="Gene3D" id="3.50.50.60">
    <property type="entry name" value="FAD/NAD(P)-binding domain"/>
    <property type="match status" value="2"/>
</dbReference>
<dbReference type="HAMAP" id="MF_01037">
    <property type="entry name" value="TrmFO"/>
    <property type="match status" value="1"/>
</dbReference>
<dbReference type="InterPro" id="IPR036188">
    <property type="entry name" value="FAD/NAD-bd_sf"/>
</dbReference>
<dbReference type="InterPro" id="IPR002218">
    <property type="entry name" value="MnmG-rel"/>
</dbReference>
<dbReference type="InterPro" id="IPR020595">
    <property type="entry name" value="MnmG-rel_CS"/>
</dbReference>
<dbReference type="InterPro" id="IPR040131">
    <property type="entry name" value="MnmG_N"/>
</dbReference>
<dbReference type="InterPro" id="IPR004417">
    <property type="entry name" value="TrmFO"/>
</dbReference>
<dbReference type="NCBIfam" id="TIGR00137">
    <property type="entry name" value="gid_trmFO"/>
    <property type="match status" value="1"/>
</dbReference>
<dbReference type="NCBIfam" id="NF003739">
    <property type="entry name" value="PRK05335.1"/>
    <property type="match status" value="1"/>
</dbReference>
<dbReference type="PANTHER" id="PTHR11806">
    <property type="entry name" value="GLUCOSE INHIBITED DIVISION PROTEIN A"/>
    <property type="match status" value="1"/>
</dbReference>
<dbReference type="PANTHER" id="PTHR11806:SF2">
    <property type="entry name" value="METHYLENETETRAHYDROFOLATE--TRNA-(URACIL-5-)-METHYLTRANSFERASE TRMFO"/>
    <property type="match status" value="1"/>
</dbReference>
<dbReference type="Pfam" id="PF01134">
    <property type="entry name" value="GIDA"/>
    <property type="match status" value="1"/>
</dbReference>
<dbReference type="SUPFAM" id="SSF51905">
    <property type="entry name" value="FAD/NAD(P)-binding domain"/>
    <property type="match status" value="1"/>
</dbReference>
<dbReference type="PROSITE" id="PS01281">
    <property type="entry name" value="GIDA_2"/>
    <property type="match status" value="1"/>
</dbReference>
<keyword id="KW-0963">Cytoplasm</keyword>
<keyword id="KW-0274">FAD</keyword>
<keyword id="KW-0285">Flavoprotein</keyword>
<keyword id="KW-0489">Methyltransferase</keyword>
<keyword id="KW-0520">NAD</keyword>
<keyword id="KW-0521">NADP</keyword>
<keyword id="KW-1185">Reference proteome</keyword>
<keyword id="KW-0808">Transferase</keyword>
<keyword id="KW-0819">tRNA processing</keyword>
<name>TRMFO_PARDP</name>